<protein>
    <recommendedName>
        <fullName>Non-structural protein 3b</fullName>
        <shortName>ns3b</shortName>
    </recommendedName>
    <alternativeName>
        <fullName>Accessory protein 3b</fullName>
    </alternativeName>
    <alternativeName>
        <fullName>Non-structural protein 3-1</fullName>
    </alternativeName>
    <alternativeName>
        <fullName>X2b protein</fullName>
    </alternativeName>
</protein>
<organism>
    <name type="scientific">Porcine transmissible gastroenteritis coronavirus (strain FS772/70)</name>
    <name type="common">TGEV</name>
    <dbReference type="NCBI Taxonomy" id="11150"/>
    <lineage>
        <taxon>Viruses</taxon>
        <taxon>Riboviria</taxon>
        <taxon>Orthornavirae</taxon>
        <taxon>Pisuviricota</taxon>
        <taxon>Pisoniviricetes</taxon>
        <taxon>Nidovirales</taxon>
        <taxon>Cornidovirineae</taxon>
        <taxon>Coronaviridae</taxon>
        <taxon>Orthocoronavirinae</taxon>
        <taxon>Alphacoronavirus</taxon>
        <taxon>Tegacovirus</taxon>
        <taxon>Alphacoronavirus 1</taxon>
    </lineage>
</organism>
<organismHost>
    <name type="scientific">Sus scrofa</name>
    <name type="common">Pig</name>
    <dbReference type="NCBI Taxonomy" id="9823"/>
</organismHost>
<reference key="1">
    <citation type="journal article" date="1989" name="Arch. Virol.">
        <title>Sequence of the coding regions from the 3.0 kb and 3.9 kb mRNA. Subgenomic species from a virulent isolate of transmissible gastroenteritis virus.</title>
        <authorList>
            <person name="Britton P."/>
            <person name="Lopez-Otin C."/>
            <person name="Martin-Alonso J.M."/>
            <person name="Parra F."/>
        </authorList>
    </citation>
    <scope>NUCLEOTIDE SEQUENCE [GENOMIC RNA]</scope>
</reference>
<accession>P22656</accession>
<evidence type="ECO:0000255" key="1"/>
<evidence type="ECO:0000255" key="2">
    <source>
        <dbReference type="PROSITE-ProRule" id="PRU01311"/>
    </source>
</evidence>
<evidence type="ECO:0000255" key="3">
    <source>
        <dbReference type="PROSITE-ProRule" id="PRU01312"/>
    </source>
</evidence>
<evidence type="ECO:0000305" key="4"/>
<gene>
    <name type="ORF">3b</name>
</gene>
<dbReference type="EMBL" id="X14551">
    <property type="protein sequence ID" value="CAA32687.1"/>
    <property type="molecule type" value="Genomic_RNA"/>
</dbReference>
<dbReference type="PIR" id="B60076">
    <property type="entry name" value="B60076"/>
</dbReference>
<dbReference type="GO" id="GO:0033644">
    <property type="term" value="C:host cell membrane"/>
    <property type="evidence" value="ECO:0007669"/>
    <property type="project" value="UniProtKB-SubCell"/>
</dbReference>
<dbReference type="GO" id="GO:0016020">
    <property type="term" value="C:membrane"/>
    <property type="evidence" value="ECO:0007669"/>
    <property type="project" value="UniProtKB-KW"/>
</dbReference>
<dbReference type="InterPro" id="IPR046446">
    <property type="entry name" value="a/bCoV_VIROPORIN_3A-like_CD"/>
</dbReference>
<dbReference type="InterPro" id="IPR046445">
    <property type="entry name" value="a/bCoV_VIROPORIN_3A-like_TM"/>
</dbReference>
<dbReference type="InterPro" id="IPR004293">
    <property type="entry name" value="Coronavirus_Orf3a/b"/>
</dbReference>
<dbReference type="Pfam" id="PF03053">
    <property type="entry name" value="Corona_NS3b"/>
    <property type="match status" value="1"/>
</dbReference>
<dbReference type="PROSITE" id="PS51967">
    <property type="entry name" value="COV_VIROPORIN_3A_CD"/>
    <property type="match status" value="1"/>
</dbReference>
<dbReference type="PROSITE" id="PS51966">
    <property type="entry name" value="COV_VIROPORIN_3A_TM"/>
    <property type="match status" value="1"/>
</dbReference>
<feature type="chain" id="PRO_0000106076" description="Non-structural protein 3b">
    <location>
        <begin position="1"/>
        <end position="244"/>
    </location>
</feature>
<feature type="transmembrane region" description="Helical" evidence="1">
    <location>
        <begin position="46"/>
        <end position="66"/>
    </location>
</feature>
<feature type="transmembrane region" description="Helical" evidence="1">
    <location>
        <begin position="75"/>
        <end position="95"/>
    </location>
</feature>
<feature type="transmembrane region" description="Helical" evidence="1">
    <location>
        <begin position="102"/>
        <end position="122"/>
    </location>
</feature>
<feature type="domain" description="CoV 3a-like viroporin TM" evidence="2">
    <location>
        <begin position="41"/>
        <end position="131"/>
    </location>
</feature>
<feature type="domain" description="CoV 3a-like viroporin CD" evidence="3">
    <location>
        <begin position="135"/>
        <end position="214"/>
    </location>
</feature>
<keyword id="KW-1043">Host membrane</keyword>
<keyword id="KW-0472">Membrane</keyword>
<keyword id="KW-0812">Transmembrane</keyword>
<keyword id="KW-1133">Transmembrane helix</keyword>
<comment type="subcellular location">
    <subcellularLocation>
        <location evidence="4">Host membrane</location>
        <topology evidence="4">Multi-pass membrane protein</topology>
    </subcellularLocation>
</comment>
<comment type="similarity">
    <text evidence="4">Belongs to the coronaviruses NS3b protein family.</text>
</comment>
<proteinExistence type="inferred from homology"/>
<sequence>MIGGLFLNTLSFVIVSNHSIVNNTANVHHIQQERVIVQQHQVVSAITQNYYPEFSIAVLFVSFLALYRSTNFKTCVGILMFKILSMTLLGPMLIAYGYYIDGIVTTTVLSLRFAYLAYFWYVNSRFEFILYNTTTLMFVHGRAAPFKRSSHSSIYVTLYGGINYMFVNDLTLHFVDPMLVSIAIRGLAHADLTVVRAVELLNGDFIYVFSQEPVVGVYNAAFSQAVLNEIDLKEEEGDRTYDVS</sequence>
<name>NS3B_CVPFS</name>